<proteinExistence type="inferred from homology"/>
<sequence>MKILFATLLVVTTPHLVTGQIHWGNLSKIGVVGTGSASYKVMTQSSHQTLVIKLMPNITAIDNCTKTEIEEYKRLLGTVLQPIKVALNAITKNIKPIRSSTTSRRHRRFAGVALAGAALGVATAAQITAGIALHQSMMNTQAIESLKASLETTNQAIEEIRQAGQEMILAVQGVQDYINNELVPAMGQLSCDIVGQKLGLKLLRYYTEILSLFGPSLRDPISAEISIQALSYALGGDINKILEKLGYSGSDLLAILESKGIKAKITYVDIESYFIVLSIAYPSLSEIKGVIIHALEGVSYNIGSQEWYTTVPRYVATQGYLISNFDDTPCAFTPEGTICSQNALYPMSPLLQECFRGSTRSCARTLVSGSIGNRFILSKGNLIANCASILCKCYTTGSIISQDPDKILTYIAADQCPIVEVDGVTIQVGSREYPDAVYLHKIDLGPPISLEKLDVGTNLGNAVTKLEKAKDLLDSSDLILETIKGASVTNTGHILVGAGLIAVVGILIVTCCCRKRSNDSKVSTVILNPGLKPDLTGTSKSYVRSL</sequence>
<name>FUS_RINDK</name>
<dbReference type="EMBL" id="M21514">
    <property type="protein sequence ID" value="AAA47400.1"/>
    <property type="molecule type" value="Genomic_RNA"/>
</dbReference>
<dbReference type="PIR" id="A31051">
    <property type="entry name" value="VGNZRK"/>
</dbReference>
<dbReference type="SMR" id="P12574"/>
<dbReference type="GlyCosmos" id="P12574">
    <property type="glycosylation" value="3 sites, No reported glycans"/>
</dbReference>
<dbReference type="GO" id="GO:0020002">
    <property type="term" value="C:host cell plasma membrane"/>
    <property type="evidence" value="ECO:0007669"/>
    <property type="project" value="UniProtKB-SubCell"/>
</dbReference>
<dbReference type="GO" id="GO:0016020">
    <property type="term" value="C:membrane"/>
    <property type="evidence" value="ECO:0007669"/>
    <property type="project" value="UniProtKB-KW"/>
</dbReference>
<dbReference type="GO" id="GO:0019031">
    <property type="term" value="C:viral envelope"/>
    <property type="evidence" value="ECO:0007669"/>
    <property type="project" value="UniProtKB-KW"/>
</dbReference>
<dbReference type="GO" id="GO:0055036">
    <property type="term" value="C:virion membrane"/>
    <property type="evidence" value="ECO:0007669"/>
    <property type="project" value="UniProtKB-SubCell"/>
</dbReference>
<dbReference type="GO" id="GO:0019064">
    <property type="term" value="P:fusion of virus membrane with host plasma membrane"/>
    <property type="evidence" value="ECO:0007669"/>
    <property type="project" value="UniProtKB-KW"/>
</dbReference>
<dbReference type="GO" id="GO:0046718">
    <property type="term" value="P:symbiont entry into host cell"/>
    <property type="evidence" value="ECO:0007669"/>
    <property type="project" value="UniProtKB-KW"/>
</dbReference>
<dbReference type="Gene3D" id="1.10.287.2480">
    <property type="match status" value="1"/>
</dbReference>
<dbReference type="Gene3D" id="6.10.10.110">
    <property type="match status" value="1"/>
</dbReference>
<dbReference type="Gene3D" id="2.60.40.1690">
    <property type="entry name" value="Head and neck region of the ectodomain of NDV fusion glycoprotein"/>
    <property type="match status" value="1"/>
</dbReference>
<dbReference type="Gene3D" id="2.40.490.10">
    <property type="entry name" value="Newcastle disease virus like domain"/>
    <property type="match status" value="1"/>
</dbReference>
<dbReference type="InterPro" id="IPR000776">
    <property type="entry name" value="Fusion_F0_Paramyxovir"/>
</dbReference>
<dbReference type="Pfam" id="PF00523">
    <property type="entry name" value="Fusion_gly"/>
    <property type="match status" value="1"/>
</dbReference>
<dbReference type="SUPFAM" id="SSF69922">
    <property type="entry name" value="Head and neck region of the ectodomain of NDV fusion glycoprotein"/>
    <property type="match status" value="1"/>
</dbReference>
<dbReference type="SUPFAM" id="SSF58069">
    <property type="entry name" value="Virus ectodomain"/>
    <property type="match status" value="1"/>
</dbReference>
<comment type="function">
    <text evidence="1">Class I viral fusion protein. Under the current model, the protein has at least 3 conformational states: pre-fusion native state, pre-hairpin intermediate state, and post-fusion hairpin state. During viral and plasma cell membrane fusion, the heptad repeat (HR) regions assume a trimer-of-hairpins structure, positioning the fusion peptide in close proximity to the C-terminal region of the ectodomain. The formation of this structure appears to drive apposition and subsequent fusion of viral and plasma cell membranes. Directs fusion of viral and cellular membranes leading to delivery of the nucleocapsid into the cytoplasm. This fusion is pH independent and occurs directly at the outer cell membrane. The trimer of F1-F2 (F protein) probably interacts with HN at the virion surface. Upon HN binding to its cellular receptor, the hydrophobic fusion peptide is unmasked and interacts with the cellular membrane, inducing the fusion between cell and virion membranes. Later in infection, F proteins expressed at the plasma membrane of infected cells could mediate fusion with adjacent cells to form syncytia, a cytopathic effect that could lead to tissue necrosis (By similarity).</text>
</comment>
<comment type="subunit">
    <text evidence="1">Homotrimer of disulfide-linked F1-F2.</text>
</comment>
<comment type="subcellular location">
    <subcellularLocation>
        <location evidence="1">Virion membrane</location>
        <topology evidence="1">Single-pass type I membrane protein</topology>
    </subcellularLocation>
    <subcellularLocation>
        <location evidence="1">Host cell membrane</location>
        <topology evidence="1">Single-pass membrane protein</topology>
    </subcellularLocation>
</comment>
<comment type="PTM">
    <text evidence="1">The inactive precursor F0 is glycosylated and proteolytically cleaved into F1 and F2 to be functionally active. The cleavage is mediated by cellular proteases during the transport and maturation of the polypeptide (By similarity).</text>
</comment>
<comment type="similarity">
    <text evidence="4">Belongs to the paramyxoviruses fusion glycoprotein family.</text>
</comment>
<keyword id="KW-0165">Cleavage on pair of basic residues</keyword>
<keyword id="KW-0175">Coiled coil</keyword>
<keyword id="KW-1015">Disulfide bond</keyword>
<keyword id="KW-1169">Fusion of virus membrane with host cell membrane</keyword>
<keyword id="KW-1168">Fusion of virus membrane with host membrane</keyword>
<keyword id="KW-0325">Glycoprotein</keyword>
<keyword id="KW-1032">Host cell membrane</keyword>
<keyword id="KW-1043">Host membrane</keyword>
<keyword id="KW-0472">Membrane</keyword>
<keyword id="KW-0732">Signal</keyword>
<keyword id="KW-0812">Transmembrane</keyword>
<keyword id="KW-1133">Transmembrane helix</keyword>
<keyword id="KW-0261">Viral envelope protein</keyword>
<keyword id="KW-1162">Viral penetration into host cytoplasm</keyword>
<keyword id="KW-0946">Virion</keyword>
<keyword id="KW-1160">Virus entry into host cell</keyword>
<reference key="1">
    <citation type="journal article" date="1988" name="Virology">
        <title>Cloning of the fusion gene of rinderpest virus: comparative sequence analysis with other morbilliviruses.</title>
        <authorList>
            <person name="Hsu D."/>
            <person name="Yamanaka M."/>
            <person name="Miller J."/>
            <person name="Dale B."/>
            <person name="Grubman M."/>
            <person name="Yilma T."/>
        </authorList>
    </citation>
    <scope>NUCLEOTIDE SEQUENCE [GENOMIC RNA]</scope>
</reference>
<organism>
    <name type="scientific">Rinderpest virus (strain Kabete O)</name>
    <name type="common">RDV</name>
    <dbReference type="NCBI Taxonomy" id="11242"/>
    <lineage>
        <taxon>Viruses</taxon>
        <taxon>Riboviria</taxon>
        <taxon>Orthornavirae</taxon>
        <taxon>Negarnaviricota</taxon>
        <taxon>Haploviricotina</taxon>
        <taxon>Monjiviricetes</taxon>
        <taxon>Mononegavirales</taxon>
        <taxon>Paramyxoviridae</taxon>
        <taxon>Orthoparamyxovirinae</taxon>
        <taxon>Morbillivirus</taxon>
        <taxon>Morbillivirus pecoris</taxon>
        <taxon>Rinderpest morbillivirus</taxon>
    </lineage>
</organism>
<accession>P12574</accession>
<evidence type="ECO:0000250" key="1"/>
<evidence type="ECO:0000250" key="2">
    <source>
        <dbReference type="UniProtKB" id="Q786F3"/>
    </source>
</evidence>
<evidence type="ECO:0000255" key="3"/>
<evidence type="ECO:0000305" key="4"/>
<protein>
    <recommendedName>
        <fullName>Fusion glycoprotein F0</fullName>
    </recommendedName>
    <component>
        <recommendedName>
            <fullName>Fusion glycoprotein F2</fullName>
        </recommendedName>
    </component>
    <component>
        <recommendedName>
            <fullName>Fusion glycoprotein F1</fullName>
        </recommendedName>
    </component>
</protein>
<gene>
    <name type="primary">F</name>
</gene>
<feature type="signal peptide" evidence="3">
    <location>
        <begin position="1"/>
        <end position="19"/>
    </location>
</feature>
<feature type="chain" id="PRO_0000039354" description="Fusion glycoprotein F0">
    <location>
        <begin position="20"/>
        <end position="546"/>
    </location>
</feature>
<feature type="chain" id="PRO_0000039355" description="Fusion glycoprotein F2">
    <location>
        <begin position="20"/>
        <end position="108"/>
    </location>
</feature>
<feature type="chain" id="PRO_0000039356" description="Fusion glycoprotein F1">
    <location>
        <begin position="109"/>
        <end position="546"/>
    </location>
</feature>
<feature type="topological domain" description="Extracellular" evidence="1">
    <location>
        <begin position="20"/>
        <end position="491"/>
    </location>
</feature>
<feature type="transmembrane region" description="Helical" evidence="1">
    <location>
        <begin position="492"/>
        <end position="512"/>
    </location>
</feature>
<feature type="topological domain" description="Cytoplasmic" evidence="1">
    <location>
        <begin position="513"/>
        <end position="546"/>
    </location>
</feature>
<feature type="region of interest" description="Fusion peptide" evidence="1">
    <location>
        <begin position="109"/>
        <end position="133"/>
    </location>
</feature>
<feature type="coiled-coil region" evidence="3">
    <location>
        <begin position="134"/>
        <end position="162"/>
    </location>
</feature>
<feature type="coiled-coil region" evidence="3">
    <location>
        <begin position="458"/>
        <end position="483"/>
    </location>
</feature>
<feature type="site" description="Cleavage; by host" evidence="1">
    <location>
        <begin position="108"/>
        <end position="109"/>
    </location>
</feature>
<feature type="glycosylation site" description="N-linked (GlcNAc...) asparagine; by host" evidence="2">
    <location>
        <position position="25"/>
    </location>
</feature>
<feature type="glycosylation site" description="N-linked (GlcNAc...) asparagine; by host" evidence="2">
    <location>
        <position position="57"/>
    </location>
</feature>
<feature type="glycosylation site" description="N-linked (GlcNAc...) asparagine; by host" evidence="3">
    <location>
        <position position="63"/>
    </location>
</feature>
<feature type="disulfide bond" description="Interchain (with C-195)" evidence="2">
    <location>
        <position position="64"/>
    </location>
</feature>
<feature type="disulfide bond" description="Interchain (with C-68)" evidence="2">
    <location>
        <position position="191"/>
    </location>
</feature>
<feature type="disulfide bond" evidence="2">
    <location>
        <begin position="330"/>
        <end position="339"/>
    </location>
</feature>
<feature type="disulfide bond" evidence="2">
    <location>
        <begin position="354"/>
        <end position="362"/>
    </location>
</feature>
<feature type="disulfide bond" evidence="2">
    <location>
        <begin position="386"/>
        <end position="391"/>
    </location>
</feature>
<feature type="disulfide bond" evidence="2">
    <location>
        <begin position="393"/>
        <end position="416"/>
    </location>
</feature>
<organismHost>
    <name type="scientific">Bos indicus</name>
    <name type="common">Zebu</name>
    <dbReference type="NCBI Taxonomy" id="9915"/>
</organismHost>
<organismHost>
    <name type="scientific">Bos taurus</name>
    <name type="common">Bovine</name>
    <dbReference type="NCBI Taxonomy" id="9913"/>
</organismHost>
<organismHost>
    <name type="scientific">Bubalus bubalis</name>
    <name type="common">Domestic water buffalo</name>
    <dbReference type="NCBI Taxonomy" id="89462"/>
</organismHost>
<organismHost>
    <name type="scientific">Capra hircus</name>
    <name type="common">Goat</name>
    <dbReference type="NCBI Taxonomy" id="9925"/>
</organismHost>
<organismHost>
    <name type="scientific">Gazella</name>
    <name type="common">gazelles</name>
    <dbReference type="NCBI Taxonomy" id="9933"/>
</organismHost>
<organismHost>
    <name type="scientific">Giraffa camelopardalis</name>
    <name type="common">Giraffe</name>
    <dbReference type="NCBI Taxonomy" id="9894"/>
</organismHost>
<organismHost>
    <name type="scientific">Hippopotamus</name>
    <dbReference type="NCBI Taxonomy" id="9832"/>
</organismHost>
<organismHost>
    <name type="scientific">Ovis aries</name>
    <name type="common">Sheep</name>
    <dbReference type="NCBI Taxonomy" id="9940"/>
</organismHost>
<organismHost>
    <name type="scientific">Suidae</name>
    <name type="common">pigs</name>
    <dbReference type="NCBI Taxonomy" id="9821"/>
</organismHost>